<comment type="function">
    <text evidence="1">Catalyzes oxygen-dependent 5-hydroxyuridine (ho5U) modification at position 34 in tRNAs.</text>
</comment>
<comment type="catalytic activity">
    <reaction evidence="1">
        <text>uridine(34) in tRNA + AH2 + O2 = 5-hydroxyuridine(34) in tRNA + A + H2O</text>
        <dbReference type="Rhea" id="RHEA:64224"/>
        <dbReference type="Rhea" id="RHEA-COMP:11727"/>
        <dbReference type="Rhea" id="RHEA-COMP:13381"/>
        <dbReference type="ChEBI" id="CHEBI:13193"/>
        <dbReference type="ChEBI" id="CHEBI:15377"/>
        <dbReference type="ChEBI" id="CHEBI:15379"/>
        <dbReference type="ChEBI" id="CHEBI:17499"/>
        <dbReference type="ChEBI" id="CHEBI:65315"/>
        <dbReference type="ChEBI" id="CHEBI:136877"/>
    </reaction>
</comment>
<comment type="similarity">
    <text evidence="1">Belongs to the TrhO family.</text>
</comment>
<gene>
    <name evidence="1" type="primary">trhO</name>
    <name type="ordered locus">BPP0754</name>
</gene>
<name>TRHO_BORPA</name>
<evidence type="ECO:0000255" key="1">
    <source>
        <dbReference type="HAMAP-Rule" id="MF_00469"/>
    </source>
</evidence>
<accession>Q7W1D9</accession>
<proteinExistence type="inferred from homology"/>
<organism>
    <name type="scientific">Bordetella parapertussis (strain 12822 / ATCC BAA-587 / NCTC 13253)</name>
    <dbReference type="NCBI Taxonomy" id="257311"/>
    <lineage>
        <taxon>Bacteria</taxon>
        <taxon>Pseudomonadati</taxon>
        <taxon>Pseudomonadota</taxon>
        <taxon>Betaproteobacteria</taxon>
        <taxon>Burkholderiales</taxon>
        <taxon>Alcaligenaceae</taxon>
        <taxon>Bordetella</taxon>
    </lineage>
</organism>
<reference key="1">
    <citation type="journal article" date="2003" name="Nat. Genet.">
        <title>Comparative analysis of the genome sequences of Bordetella pertussis, Bordetella parapertussis and Bordetella bronchiseptica.</title>
        <authorList>
            <person name="Parkhill J."/>
            <person name="Sebaihia M."/>
            <person name="Preston A."/>
            <person name="Murphy L.D."/>
            <person name="Thomson N.R."/>
            <person name="Harris D.E."/>
            <person name="Holden M.T.G."/>
            <person name="Churcher C.M."/>
            <person name="Bentley S.D."/>
            <person name="Mungall K.L."/>
            <person name="Cerdeno-Tarraga A.-M."/>
            <person name="Temple L."/>
            <person name="James K.D."/>
            <person name="Harris B."/>
            <person name="Quail M.A."/>
            <person name="Achtman M."/>
            <person name="Atkin R."/>
            <person name="Baker S."/>
            <person name="Basham D."/>
            <person name="Bason N."/>
            <person name="Cherevach I."/>
            <person name="Chillingworth T."/>
            <person name="Collins M."/>
            <person name="Cronin A."/>
            <person name="Davis P."/>
            <person name="Doggett J."/>
            <person name="Feltwell T."/>
            <person name="Goble A."/>
            <person name="Hamlin N."/>
            <person name="Hauser H."/>
            <person name="Holroyd S."/>
            <person name="Jagels K."/>
            <person name="Leather S."/>
            <person name="Moule S."/>
            <person name="Norberczak H."/>
            <person name="O'Neil S."/>
            <person name="Ormond D."/>
            <person name="Price C."/>
            <person name="Rabbinowitsch E."/>
            <person name="Rutter S."/>
            <person name="Sanders M."/>
            <person name="Saunders D."/>
            <person name="Seeger K."/>
            <person name="Sharp S."/>
            <person name="Simmonds M."/>
            <person name="Skelton J."/>
            <person name="Squares R."/>
            <person name="Squares S."/>
            <person name="Stevens K."/>
            <person name="Unwin L."/>
            <person name="Whitehead S."/>
            <person name="Barrell B.G."/>
            <person name="Maskell D.J."/>
        </authorList>
    </citation>
    <scope>NUCLEOTIDE SEQUENCE [LARGE SCALE GENOMIC DNA]</scope>
    <source>
        <strain>12822 / ATCC BAA-587 / NCTC 13253</strain>
    </source>
</reference>
<keyword id="KW-0560">Oxidoreductase</keyword>
<keyword id="KW-0819">tRNA processing</keyword>
<feature type="chain" id="PRO_0000161449" description="tRNA uridine(34) hydroxylase">
    <location>
        <begin position="1"/>
        <end position="239"/>
    </location>
</feature>
<feature type="domain" description="Rhodanese" evidence="1">
    <location>
        <begin position="124"/>
        <end position="214"/>
    </location>
</feature>
<feature type="active site" description="Cysteine persulfide intermediate" evidence="1">
    <location>
        <position position="178"/>
    </location>
</feature>
<protein>
    <recommendedName>
        <fullName evidence="1">tRNA uridine(34) hydroxylase</fullName>
        <ecNumber evidence="1">1.14.-.-</ecNumber>
    </recommendedName>
    <alternativeName>
        <fullName evidence="1">tRNA hydroxylation protein O</fullName>
    </alternativeName>
</protein>
<dbReference type="EC" id="1.14.-.-" evidence="1"/>
<dbReference type="EMBL" id="BX640425">
    <property type="protein sequence ID" value="CAE40163.1"/>
    <property type="molecule type" value="Genomic_DNA"/>
</dbReference>
<dbReference type="RefSeq" id="WP_010927665.1">
    <property type="nucleotide sequence ID" value="NC_002928.3"/>
</dbReference>
<dbReference type="SMR" id="Q7W1D9"/>
<dbReference type="DNASU" id="1668516"/>
<dbReference type="GeneID" id="93202504"/>
<dbReference type="KEGG" id="bpa:BPP0754"/>
<dbReference type="HOGENOM" id="CLU_038878_0_1_4"/>
<dbReference type="Proteomes" id="UP000001421">
    <property type="component" value="Chromosome"/>
</dbReference>
<dbReference type="GO" id="GO:0016705">
    <property type="term" value="F:oxidoreductase activity, acting on paired donors, with incorporation or reduction of molecular oxygen"/>
    <property type="evidence" value="ECO:0007669"/>
    <property type="project" value="UniProtKB-UniRule"/>
</dbReference>
<dbReference type="GO" id="GO:0006400">
    <property type="term" value="P:tRNA modification"/>
    <property type="evidence" value="ECO:0007669"/>
    <property type="project" value="UniProtKB-UniRule"/>
</dbReference>
<dbReference type="Gene3D" id="3.30.70.100">
    <property type="match status" value="1"/>
</dbReference>
<dbReference type="Gene3D" id="3.40.250.10">
    <property type="entry name" value="Rhodanese-like domain"/>
    <property type="match status" value="1"/>
</dbReference>
<dbReference type="HAMAP" id="MF_00469">
    <property type="entry name" value="TrhO"/>
    <property type="match status" value="1"/>
</dbReference>
<dbReference type="InterPro" id="IPR001763">
    <property type="entry name" value="Rhodanese-like_dom"/>
</dbReference>
<dbReference type="InterPro" id="IPR036873">
    <property type="entry name" value="Rhodanese-like_dom_sf"/>
</dbReference>
<dbReference type="InterPro" id="IPR020936">
    <property type="entry name" value="TrhO"/>
</dbReference>
<dbReference type="InterPro" id="IPR040503">
    <property type="entry name" value="TRHO_N"/>
</dbReference>
<dbReference type="NCBIfam" id="NF003703">
    <property type="entry name" value="PRK05320.1"/>
    <property type="match status" value="1"/>
</dbReference>
<dbReference type="PANTHER" id="PTHR43268:SF3">
    <property type="entry name" value="RHODANESE-LIKE DOMAIN-CONTAINING PROTEIN 7-RELATED"/>
    <property type="match status" value="1"/>
</dbReference>
<dbReference type="PANTHER" id="PTHR43268">
    <property type="entry name" value="THIOSULFATE SULFURTRANSFERASE/RHODANESE-LIKE DOMAIN-CONTAINING PROTEIN 2"/>
    <property type="match status" value="1"/>
</dbReference>
<dbReference type="Pfam" id="PF00581">
    <property type="entry name" value="Rhodanese"/>
    <property type="match status" value="1"/>
</dbReference>
<dbReference type="Pfam" id="PF17773">
    <property type="entry name" value="UPF0176_N"/>
    <property type="match status" value="1"/>
</dbReference>
<dbReference type="SMART" id="SM00450">
    <property type="entry name" value="RHOD"/>
    <property type="match status" value="1"/>
</dbReference>
<dbReference type="SUPFAM" id="SSF52821">
    <property type="entry name" value="Rhodanese/Cell cycle control phosphatase"/>
    <property type="match status" value="1"/>
</dbReference>
<dbReference type="PROSITE" id="PS50206">
    <property type="entry name" value="RHODANESE_3"/>
    <property type="match status" value="1"/>
</dbReference>
<sequence length="239" mass="26395">MTAVVNIAAYKFVSIANPADLREPMLEQAGQRQLKGTVLLAPEGINLFLAGAADAIEGFLRWLRADARFADLQAKYSESARMPFRKLLVKVKREIIRMDHPAIRPEAGRAPAVDAATLRRWLAQGRELVMLDTRNAFEVEVGTFRGALDWRIERFTQFPQAVRDNQAALAGKTVVSFCMGGIRCEKAAIYMAEAGIEHVYQLEGGILKYFEETDGAGFDGACFVFDERVALDAALAPQA</sequence>